<protein>
    <recommendedName>
        <fullName evidence="1">Nucleotide-binding protein Mmcs_0777</fullName>
    </recommendedName>
</protein>
<comment type="function">
    <text evidence="1">Nucleotide-binding protein.</text>
</comment>
<comment type="similarity">
    <text evidence="1">Belongs to the YajQ family.</text>
</comment>
<comment type="sequence caution" evidence="2">
    <conflict type="erroneous initiation">
        <sequence resource="EMBL-CDS" id="ABG06897"/>
    </conflict>
</comment>
<accession>Q1BDY7</accession>
<organism>
    <name type="scientific">Mycobacterium sp. (strain MCS)</name>
    <dbReference type="NCBI Taxonomy" id="164756"/>
    <lineage>
        <taxon>Bacteria</taxon>
        <taxon>Bacillati</taxon>
        <taxon>Actinomycetota</taxon>
        <taxon>Actinomycetes</taxon>
        <taxon>Mycobacteriales</taxon>
        <taxon>Mycobacteriaceae</taxon>
        <taxon>Mycobacterium</taxon>
    </lineage>
</organism>
<feature type="chain" id="PRO_0000261951" description="Nucleotide-binding protein Mmcs_0777">
    <location>
        <begin position="1"/>
        <end position="163"/>
    </location>
</feature>
<evidence type="ECO:0000255" key="1">
    <source>
        <dbReference type="HAMAP-Rule" id="MF_00632"/>
    </source>
</evidence>
<evidence type="ECO:0000305" key="2"/>
<name>Y777_MYCSS</name>
<reference key="1">
    <citation type="submission" date="2006-06" db="EMBL/GenBank/DDBJ databases">
        <title>Complete sequence of chromosome of Mycobacterium sp. MCS.</title>
        <authorList>
            <consortium name="US DOE Joint Genome Institute"/>
            <person name="Copeland A."/>
            <person name="Lucas S."/>
            <person name="Lapidus A."/>
            <person name="Barry K."/>
            <person name="Detter J.C."/>
            <person name="Glavina del Rio T."/>
            <person name="Hammon N."/>
            <person name="Israni S."/>
            <person name="Dalin E."/>
            <person name="Tice H."/>
            <person name="Pitluck S."/>
            <person name="Martinez M."/>
            <person name="Schmutz J."/>
            <person name="Larimer F."/>
            <person name="Land M."/>
            <person name="Hauser L."/>
            <person name="Kyrpides N."/>
            <person name="Kim E."/>
            <person name="Miller C.D."/>
            <person name="Hughes J.E."/>
            <person name="Anderson A.J."/>
            <person name="Sims R.C."/>
            <person name="Richardson P."/>
        </authorList>
    </citation>
    <scope>NUCLEOTIDE SEQUENCE [LARGE SCALE GENOMIC DNA]</scope>
    <source>
        <strain>MCS</strain>
    </source>
</reference>
<gene>
    <name type="ordered locus">Mmcs_0777</name>
</gene>
<keyword id="KW-0547">Nucleotide-binding</keyword>
<dbReference type="EMBL" id="CP000384">
    <property type="protein sequence ID" value="ABG06897.1"/>
    <property type="status" value="ALT_INIT"/>
    <property type="molecule type" value="Genomic_DNA"/>
</dbReference>
<dbReference type="SMR" id="Q1BDY7"/>
<dbReference type="KEGG" id="mmc:Mmcs_0777"/>
<dbReference type="HOGENOM" id="CLU_099839_0_0_11"/>
<dbReference type="BioCyc" id="MSP164756:G1G6O-793-MONOMER"/>
<dbReference type="GO" id="GO:0005829">
    <property type="term" value="C:cytosol"/>
    <property type="evidence" value="ECO:0007669"/>
    <property type="project" value="TreeGrafter"/>
</dbReference>
<dbReference type="GO" id="GO:0000166">
    <property type="term" value="F:nucleotide binding"/>
    <property type="evidence" value="ECO:0007669"/>
    <property type="project" value="TreeGrafter"/>
</dbReference>
<dbReference type="CDD" id="cd11740">
    <property type="entry name" value="YajQ_like"/>
    <property type="match status" value="1"/>
</dbReference>
<dbReference type="FunFam" id="3.30.70.860:FF:000004">
    <property type="entry name" value="UPF0234 protein AWC22_11905"/>
    <property type="match status" value="1"/>
</dbReference>
<dbReference type="FunFam" id="3.30.70.990:FF:000003">
    <property type="entry name" value="UPF0234 protein MIP_06774"/>
    <property type="match status" value="1"/>
</dbReference>
<dbReference type="Gene3D" id="3.30.70.860">
    <property type="match status" value="1"/>
</dbReference>
<dbReference type="Gene3D" id="3.30.70.990">
    <property type="entry name" value="YajQ-like, domain 2"/>
    <property type="match status" value="1"/>
</dbReference>
<dbReference type="HAMAP" id="MF_00632">
    <property type="entry name" value="YajQ"/>
    <property type="match status" value="1"/>
</dbReference>
<dbReference type="InterPro" id="IPR007551">
    <property type="entry name" value="DUF520"/>
</dbReference>
<dbReference type="InterPro" id="IPR035571">
    <property type="entry name" value="UPF0234-like_C"/>
</dbReference>
<dbReference type="InterPro" id="IPR035570">
    <property type="entry name" value="UPF0234_N"/>
</dbReference>
<dbReference type="InterPro" id="IPR036183">
    <property type="entry name" value="YajQ-like_sf"/>
</dbReference>
<dbReference type="NCBIfam" id="NF003819">
    <property type="entry name" value="PRK05412.1"/>
    <property type="match status" value="1"/>
</dbReference>
<dbReference type="PANTHER" id="PTHR30476">
    <property type="entry name" value="UPF0234 PROTEIN YAJQ"/>
    <property type="match status" value="1"/>
</dbReference>
<dbReference type="PANTHER" id="PTHR30476:SF0">
    <property type="entry name" value="UPF0234 PROTEIN YAJQ"/>
    <property type="match status" value="1"/>
</dbReference>
<dbReference type="Pfam" id="PF04461">
    <property type="entry name" value="DUF520"/>
    <property type="match status" value="1"/>
</dbReference>
<dbReference type="SUPFAM" id="SSF89963">
    <property type="entry name" value="YajQ-like"/>
    <property type="match status" value="2"/>
</dbReference>
<sequence>MADSSFDVVSKVDRQEVDNALNQAAKELSTRFDFRGTDTTIAWKGEEAIEIVSSTEERVKAAVDVFKEKLVRRDISMKAFDAGDPQPSGKTYKVNGTIKEGITSEQAKKITKIIRDEGPKGVKAQIQGDEIRVSSKKRDDLQTVISLLKQADLEVALQFVNYR</sequence>
<proteinExistence type="inferred from homology"/>